<accession>C1BE29</accession>
<gene>
    <name type="ordered locus">ROP_pROB02-02250</name>
</gene>
<keyword id="KW-0058">Aromatic hydrocarbons catabolism</keyword>
<keyword id="KW-0520">NAD</keyword>
<keyword id="KW-0560">Oxidoreductase</keyword>
<keyword id="KW-0614">Plasmid</keyword>
<feature type="chain" id="PRO_0000387725" description="Acetaldehyde dehydrogenase 6">
    <location>
        <begin position="1"/>
        <end position="327"/>
    </location>
</feature>
<feature type="active site" description="Acyl-thioester intermediate" evidence="1">
    <location>
        <position position="133"/>
    </location>
</feature>
<feature type="binding site" evidence="1">
    <location>
        <begin position="15"/>
        <end position="18"/>
    </location>
    <ligand>
        <name>NAD(+)</name>
        <dbReference type="ChEBI" id="CHEBI:57540"/>
    </ligand>
</feature>
<feature type="binding site" evidence="1">
    <location>
        <begin position="164"/>
        <end position="172"/>
    </location>
    <ligand>
        <name>NAD(+)</name>
        <dbReference type="ChEBI" id="CHEBI:57540"/>
    </ligand>
</feature>
<feature type="binding site" evidence="1">
    <location>
        <position position="297"/>
    </location>
    <ligand>
        <name>NAD(+)</name>
        <dbReference type="ChEBI" id="CHEBI:57540"/>
    </ligand>
</feature>
<reference key="1">
    <citation type="submission" date="2009-03" db="EMBL/GenBank/DDBJ databases">
        <title>Comparison of the complete genome sequences of Rhodococcus erythropolis PR4 and Rhodococcus opacus B4.</title>
        <authorList>
            <person name="Takarada H."/>
            <person name="Sekine M."/>
            <person name="Hosoyama A."/>
            <person name="Yamada R."/>
            <person name="Fujisawa T."/>
            <person name="Omata S."/>
            <person name="Shimizu A."/>
            <person name="Tsukatani N."/>
            <person name="Tanikawa S."/>
            <person name="Fujita N."/>
            <person name="Harayama S."/>
        </authorList>
    </citation>
    <scope>NUCLEOTIDE SEQUENCE [LARGE SCALE GENOMIC DNA]</scope>
    <source>
        <strain>B4</strain>
    </source>
</reference>
<geneLocation type="plasmid">
    <name>pROB02</name>
</geneLocation>
<organism>
    <name type="scientific">Rhodococcus opacus (strain B4)</name>
    <dbReference type="NCBI Taxonomy" id="632772"/>
    <lineage>
        <taxon>Bacteria</taxon>
        <taxon>Bacillati</taxon>
        <taxon>Actinomycetota</taxon>
        <taxon>Actinomycetes</taxon>
        <taxon>Mycobacteriales</taxon>
        <taxon>Nocardiaceae</taxon>
        <taxon>Rhodococcus</taxon>
    </lineage>
</organism>
<comment type="catalytic activity">
    <reaction evidence="1">
        <text>acetaldehyde + NAD(+) + CoA = acetyl-CoA + NADH + H(+)</text>
        <dbReference type="Rhea" id="RHEA:23288"/>
        <dbReference type="ChEBI" id="CHEBI:15343"/>
        <dbReference type="ChEBI" id="CHEBI:15378"/>
        <dbReference type="ChEBI" id="CHEBI:57287"/>
        <dbReference type="ChEBI" id="CHEBI:57288"/>
        <dbReference type="ChEBI" id="CHEBI:57540"/>
        <dbReference type="ChEBI" id="CHEBI:57945"/>
        <dbReference type="EC" id="1.2.1.10"/>
    </reaction>
</comment>
<comment type="similarity">
    <text evidence="1">Belongs to the acetaldehyde dehydrogenase family.</text>
</comment>
<evidence type="ECO:0000255" key="1">
    <source>
        <dbReference type="HAMAP-Rule" id="MF_01657"/>
    </source>
</evidence>
<dbReference type="EC" id="1.2.1.10" evidence="1"/>
<dbReference type="EMBL" id="AP011117">
    <property type="protein sequence ID" value="BAH47232.1"/>
    <property type="molecule type" value="Genomic_DNA"/>
</dbReference>
<dbReference type="RefSeq" id="WP_012687258.1">
    <property type="nucleotide sequence ID" value="NC_012521.1"/>
</dbReference>
<dbReference type="SMR" id="C1BE29"/>
<dbReference type="KEGG" id="rop:ROP_pROB02-02250"/>
<dbReference type="PATRIC" id="fig|632772.20.peg.8609"/>
<dbReference type="HOGENOM" id="CLU_062208_0_0_11"/>
<dbReference type="OrthoDB" id="9786743at2"/>
<dbReference type="Proteomes" id="UP000002212">
    <property type="component" value="Plasmid pROB02"/>
</dbReference>
<dbReference type="GO" id="GO:0008774">
    <property type="term" value="F:acetaldehyde dehydrogenase (acetylating) activity"/>
    <property type="evidence" value="ECO:0007669"/>
    <property type="project" value="UniProtKB-UniRule"/>
</dbReference>
<dbReference type="GO" id="GO:0051287">
    <property type="term" value="F:NAD binding"/>
    <property type="evidence" value="ECO:0007669"/>
    <property type="project" value="UniProtKB-UniRule"/>
</dbReference>
<dbReference type="GO" id="GO:0009056">
    <property type="term" value="P:catabolic process"/>
    <property type="evidence" value="ECO:0007669"/>
    <property type="project" value="UniProtKB-KW"/>
</dbReference>
<dbReference type="CDD" id="cd23933">
    <property type="entry name" value="ALDH_C"/>
    <property type="match status" value="1"/>
</dbReference>
<dbReference type="Gene3D" id="3.30.360.10">
    <property type="entry name" value="Dihydrodipicolinate Reductase, domain 2"/>
    <property type="match status" value="1"/>
</dbReference>
<dbReference type="Gene3D" id="3.40.50.720">
    <property type="entry name" value="NAD(P)-binding Rossmann-like Domain"/>
    <property type="match status" value="1"/>
</dbReference>
<dbReference type="HAMAP" id="MF_01657">
    <property type="entry name" value="Ac_ald_DH_ac"/>
    <property type="match status" value="1"/>
</dbReference>
<dbReference type="InterPro" id="IPR003361">
    <property type="entry name" value="Acetaldehyde_dehydrogenase"/>
</dbReference>
<dbReference type="InterPro" id="IPR015426">
    <property type="entry name" value="Acetylaldehyde_DH_C"/>
</dbReference>
<dbReference type="InterPro" id="IPR036291">
    <property type="entry name" value="NAD(P)-bd_dom_sf"/>
</dbReference>
<dbReference type="InterPro" id="IPR000534">
    <property type="entry name" value="Semialdehyde_DH_NAD-bd"/>
</dbReference>
<dbReference type="NCBIfam" id="TIGR03215">
    <property type="entry name" value="ac_ald_DH_ac"/>
    <property type="match status" value="1"/>
</dbReference>
<dbReference type="NCBIfam" id="NF006157">
    <property type="entry name" value="PRK08300.1"/>
    <property type="match status" value="1"/>
</dbReference>
<dbReference type="Pfam" id="PF09290">
    <property type="entry name" value="AcetDehyd-dimer"/>
    <property type="match status" value="1"/>
</dbReference>
<dbReference type="PIRSF" id="PIRSF015689">
    <property type="entry name" value="Actaldh_dh_actl"/>
    <property type="match status" value="1"/>
</dbReference>
<dbReference type="SMART" id="SM00859">
    <property type="entry name" value="Semialdhyde_dh"/>
    <property type="match status" value="1"/>
</dbReference>
<dbReference type="SUPFAM" id="SSF55347">
    <property type="entry name" value="Glyceraldehyde-3-phosphate dehydrogenase-like, C-terminal domain"/>
    <property type="match status" value="1"/>
</dbReference>
<dbReference type="SUPFAM" id="SSF51735">
    <property type="entry name" value="NAD(P)-binding Rossmann-fold domains"/>
    <property type="match status" value="1"/>
</dbReference>
<name>ACDH6_RHOOB</name>
<sequence>MSENTRKVTVAVIGSGNIGTDLMIKVIRHSDVLQMGAMVGIDPDSDGLARARRLGVPTTAVGVHGLLELPNFDEIDVVFDATSAKAHAANAALLEPLGKRLIDLTPAALGPFVVPAVNLDEHRHAANVNMVTCGGQATIPIVAAVSRVTPVAYAEIVASIASKSAGPGTRANIDEFTETTSHAIETVGGARRGKAIIVLNPADPPLIMRDTVLCLISARDPATHDAIRNSIQAMVEHVATYVPGYRLKQQVQITPVPDGQPVHTLLASGDTAAPTHQVSVFLEVEGAAHYLPAYAGNLDIMTSAAVRYAESVADTIAAPAATQGATR</sequence>
<protein>
    <recommendedName>
        <fullName evidence="1">Acetaldehyde dehydrogenase 6</fullName>
        <ecNumber evidence="1">1.2.1.10</ecNumber>
    </recommendedName>
    <alternativeName>
        <fullName evidence="1">Acetaldehyde dehydrogenase [acetylating] 6</fullName>
    </alternativeName>
</protein>
<proteinExistence type="inferred from homology"/>